<proteinExistence type="evidence at protein level"/>
<name>CCDC8_RAT</name>
<dbReference type="EMBL" id="BC060520">
    <property type="protein sequence ID" value="AAH60520.1"/>
    <property type="molecule type" value="mRNA"/>
</dbReference>
<dbReference type="RefSeq" id="NP_001009533.2">
    <property type="nucleotide sequence ID" value="NM_001009533.2"/>
</dbReference>
<dbReference type="SMR" id="P62521"/>
<dbReference type="FunCoup" id="P62521">
    <property type="interactions" value="370"/>
</dbReference>
<dbReference type="STRING" id="10116.ENSRNOP00000068789"/>
<dbReference type="GlyGen" id="P62521">
    <property type="glycosylation" value="1 site"/>
</dbReference>
<dbReference type="iPTMnet" id="P62521"/>
<dbReference type="PhosphoSitePlus" id="P62521"/>
<dbReference type="GeneID" id="494320"/>
<dbReference type="KEGG" id="rno:494320"/>
<dbReference type="UCSC" id="RGD:1359717">
    <property type="organism name" value="rat"/>
</dbReference>
<dbReference type="AGR" id="RGD:1359717"/>
<dbReference type="CTD" id="83987"/>
<dbReference type="RGD" id="1359717">
    <property type="gene designation" value="Ccdc8"/>
</dbReference>
<dbReference type="InParanoid" id="P62521"/>
<dbReference type="OrthoDB" id="91152at9989"/>
<dbReference type="PhylomeDB" id="P62521"/>
<dbReference type="Reactome" id="R-RNO-8951664">
    <property type="pathway name" value="Neddylation"/>
</dbReference>
<dbReference type="PRO" id="PR:P62521"/>
<dbReference type="Proteomes" id="UP000002494">
    <property type="component" value="Unplaced"/>
</dbReference>
<dbReference type="GO" id="GO:1990393">
    <property type="term" value="C:3M complex"/>
    <property type="evidence" value="ECO:0000250"/>
    <property type="project" value="UniProtKB"/>
</dbReference>
<dbReference type="GO" id="GO:0005813">
    <property type="term" value="C:centrosome"/>
    <property type="evidence" value="ECO:0000250"/>
    <property type="project" value="UniProtKB"/>
</dbReference>
<dbReference type="GO" id="GO:0005737">
    <property type="term" value="C:cytoplasm"/>
    <property type="evidence" value="ECO:0000250"/>
    <property type="project" value="UniProtKB"/>
</dbReference>
<dbReference type="GO" id="GO:0000226">
    <property type="term" value="P:microtubule cytoskeleton organization"/>
    <property type="evidence" value="ECO:0000250"/>
    <property type="project" value="UniProtKB"/>
</dbReference>
<dbReference type="GO" id="GO:0007088">
    <property type="term" value="P:regulation of mitotic nuclear division"/>
    <property type="evidence" value="ECO:0000250"/>
    <property type="project" value="UniProtKB"/>
</dbReference>
<dbReference type="InterPro" id="IPR026526">
    <property type="entry name" value="Coiled-coil_p8"/>
</dbReference>
<dbReference type="PANTHER" id="PTHR47741">
    <property type="entry name" value="COILED COIL DOMAIN-CONTAINING PROTEIN 8, CCDC8"/>
    <property type="match status" value="1"/>
</dbReference>
<dbReference type="PANTHER" id="PTHR47741:SF1">
    <property type="entry name" value="COILED-COIL DOMAIN-CONTAINING PROTEIN 8"/>
    <property type="match status" value="1"/>
</dbReference>
<sequence length="643" mass="69589">MLQIGEDVDYLLIPREVRLAGGVWRVISKPATKEAVFRERLIQFLQEEGRTLEDVARIIEKSTPHPPQPPKKAKVPRVRRVPQMVTPPLRLVVGTYDSSNGSDSELSDFDTSKVKGNRGSGKTRKVRKMPVSYLGSKFLGSDESEDDQELVEAFLRRGEKKPSAPPPRRRVNLPVPMFENNLGPQPSKGDRWREYVSQVSWGKLKQRVRGWAPRSGSEVGQAQQSSIAERAGEMRHSHTSPDLDDSSRNTGDLSDQTLITRRWKPKIKWVSLRRCRKEQVPPLAHGTAEEPPEAAENQGAGAAAEHGVEAAASQRPEAAASPRAEAAANPRAEATANPRAEAAANPRAEAAASPRAEAAANPRAEAAANPRAEATANPRAEAAANPRAEATANPRAEAAVNPRTEAAVNPRTEAAANPRAEAAVNPRAEATASPRAEAEVNQKTEATASPRAETAASPRVEAAASLRVEAAASPRAEATVSPRAEAVATPRAETAASARVEAAANLRAGVLPDQRAEAIDSQRAEGPVNQSTGATENQRVEVLADQRAGVLHDQREEAGPQAILEASADSGSRARKQVKTVRFQTPGRFSWFHMRRKAFWHTPRLPTLPKRGPRAGAGEARSLRVLRADTRADMEHREQEEQL</sequence>
<evidence type="ECO:0000250" key="1">
    <source>
        <dbReference type="UniProtKB" id="Q9H0W5"/>
    </source>
</evidence>
<evidence type="ECO:0000256" key="2">
    <source>
        <dbReference type="SAM" id="MobiDB-lite"/>
    </source>
</evidence>
<evidence type="ECO:0007744" key="3">
    <source>
    </source>
</evidence>
<comment type="function">
    <text evidence="1">Core component of the 3M complex, a complex required to regulate microtubule dynamics and genome integrity. It is unclear how the 3M complex regulates microtubules, it could act by controlling the level of a microtubule stabilizer. Required for localization of CUL7 to the centrosome.</text>
</comment>
<comment type="subunit">
    <text evidence="1">Component of the 3M complex, composed of core components CUL7, CCDC8 and OBSL1. Interacts (via PxLPxI/L motif) with ANKRA2 (via ankyrin repeats); may link the 3M complex to histone deacetylases including HDAC4 and HDAC5.</text>
</comment>
<comment type="subcellular location">
    <subcellularLocation>
        <location evidence="1">Cytoplasm</location>
    </subcellularLocation>
    <subcellularLocation>
        <location evidence="1">Cytoplasm</location>
        <location evidence="1">Cytoskeleton</location>
        <location evidence="1">Microtubule organizing center</location>
        <location evidence="1">Centrosome</location>
    </subcellularLocation>
</comment>
<comment type="domain">
    <text evidence="1">The PxLPxI/L motif mediates interaction with ankyrin repeats of ANKRA2.</text>
</comment>
<comment type="miscellaneous">
    <text>Despite its name, does not contain a coiled coil domain.</text>
</comment>
<organism>
    <name type="scientific">Rattus norvegicus</name>
    <name type="common">Rat</name>
    <dbReference type="NCBI Taxonomy" id="10116"/>
    <lineage>
        <taxon>Eukaryota</taxon>
        <taxon>Metazoa</taxon>
        <taxon>Chordata</taxon>
        <taxon>Craniata</taxon>
        <taxon>Vertebrata</taxon>
        <taxon>Euteleostomi</taxon>
        <taxon>Mammalia</taxon>
        <taxon>Eutheria</taxon>
        <taxon>Euarchontoglires</taxon>
        <taxon>Glires</taxon>
        <taxon>Rodentia</taxon>
        <taxon>Myomorpha</taxon>
        <taxon>Muroidea</taxon>
        <taxon>Muridae</taxon>
        <taxon>Murinae</taxon>
        <taxon>Rattus</taxon>
    </lineage>
</organism>
<reference key="1">
    <citation type="journal article" date="2004" name="Genome Res.">
        <title>The status, quality, and expansion of the NIH full-length cDNA project: the Mammalian Gene Collection (MGC).</title>
        <authorList>
            <consortium name="The MGC Project Team"/>
        </authorList>
    </citation>
    <scope>NUCLEOTIDE SEQUENCE [LARGE SCALE MRNA]</scope>
    <source>
        <tissue>Prostate</tissue>
    </source>
</reference>
<reference key="2">
    <citation type="journal article" date="2012" name="Nat. Commun.">
        <title>Quantitative maps of protein phosphorylation sites across 14 different rat organs and tissues.</title>
        <authorList>
            <person name="Lundby A."/>
            <person name="Secher A."/>
            <person name="Lage K."/>
            <person name="Nordsborg N.B."/>
            <person name="Dmytriyev A."/>
            <person name="Lundby C."/>
            <person name="Olsen J.V."/>
        </authorList>
    </citation>
    <scope>PHOSPHORYLATION [LARGE SCALE ANALYSIS] AT SER-141</scope>
    <scope>IDENTIFICATION BY MASS SPECTROMETRY [LARGE SCALE ANALYSIS]</scope>
</reference>
<feature type="chain" id="PRO_0000089402" description="Coiled-coil domain-containing protein 8">
    <location>
        <begin position="1"/>
        <end position="643"/>
    </location>
</feature>
<feature type="region of interest" description="Disordered" evidence="2">
    <location>
        <begin position="93"/>
        <end position="124"/>
    </location>
</feature>
<feature type="region of interest" description="Disordered" evidence="2">
    <location>
        <begin position="156"/>
        <end position="191"/>
    </location>
</feature>
<feature type="region of interest" description="Disordered" evidence="2">
    <location>
        <begin position="206"/>
        <end position="492"/>
    </location>
</feature>
<feature type="region of interest" description="Disordered" evidence="2">
    <location>
        <begin position="519"/>
        <end position="540"/>
    </location>
</feature>
<feature type="region of interest" description="Disordered" evidence="2">
    <location>
        <begin position="553"/>
        <end position="577"/>
    </location>
</feature>
<feature type="region of interest" description="Disordered" evidence="2">
    <location>
        <begin position="603"/>
        <end position="643"/>
    </location>
</feature>
<feature type="short sequence motif" description="PxLPxI/L motif; mediates interaction with ANKRA2" evidence="1">
    <location>
        <begin position="603"/>
        <end position="609"/>
    </location>
</feature>
<feature type="compositionally biased region" description="Polar residues" evidence="2">
    <location>
        <begin position="218"/>
        <end position="227"/>
    </location>
</feature>
<feature type="compositionally biased region" description="Basic and acidic residues" evidence="2">
    <location>
        <begin position="230"/>
        <end position="247"/>
    </location>
</feature>
<feature type="compositionally biased region" description="Polar residues" evidence="2">
    <location>
        <begin position="248"/>
        <end position="259"/>
    </location>
</feature>
<feature type="compositionally biased region" description="Basic residues" evidence="2">
    <location>
        <begin position="261"/>
        <end position="276"/>
    </location>
</feature>
<feature type="compositionally biased region" description="Low complexity" evidence="2">
    <location>
        <begin position="294"/>
        <end position="399"/>
    </location>
</feature>
<feature type="compositionally biased region" description="Low complexity" evidence="2">
    <location>
        <begin position="409"/>
        <end position="432"/>
    </location>
</feature>
<feature type="compositionally biased region" description="Low complexity" evidence="2">
    <location>
        <begin position="459"/>
        <end position="473"/>
    </location>
</feature>
<feature type="compositionally biased region" description="Polar residues" evidence="2">
    <location>
        <begin position="528"/>
        <end position="537"/>
    </location>
</feature>
<feature type="compositionally biased region" description="Basic and acidic residues" evidence="2">
    <location>
        <begin position="626"/>
        <end position="643"/>
    </location>
</feature>
<feature type="modified residue" description="Phosphoserine" evidence="3">
    <location>
        <position position="141"/>
    </location>
</feature>
<feature type="modified residue" description="Phosphoserine" evidence="1">
    <location>
        <position position="144"/>
    </location>
</feature>
<accession>P62521</accession>
<accession>Q6P9Z5</accession>
<gene>
    <name type="primary">Ccdc8</name>
</gene>
<protein>
    <recommendedName>
        <fullName>Coiled-coil domain-containing protein 8</fullName>
    </recommendedName>
</protein>
<keyword id="KW-0963">Cytoplasm</keyword>
<keyword id="KW-0206">Cytoskeleton</keyword>
<keyword id="KW-0597">Phosphoprotein</keyword>
<keyword id="KW-1185">Reference proteome</keyword>